<name>COG6_CRYNB</name>
<protein>
    <recommendedName>
        <fullName>Conserved oligomeric Golgi complex subunit 6</fullName>
        <shortName>COG complex subunit 6</shortName>
    </recommendedName>
    <alternativeName>
        <fullName>Component of oligomeric Golgi complex 6</fullName>
    </alternativeName>
</protein>
<feature type="chain" id="PRO_0000410043" description="Conserved oligomeric Golgi complex subunit 6">
    <location>
        <begin position="1"/>
        <end position="742"/>
    </location>
</feature>
<feature type="region of interest" description="Disordered" evidence="2">
    <location>
        <begin position="692"/>
        <end position="742"/>
    </location>
</feature>
<feature type="compositionally biased region" description="Acidic residues" evidence="2">
    <location>
        <begin position="694"/>
        <end position="703"/>
    </location>
</feature>
<feature type="compositionally biased region" description="Basic and acidic residues" evidence="2">
    <location>
        <begin position="720"/>
        <end position="742"/>
    </location>
</feature>
<organism>
    <name type="scientific">Cryptococcus neoformans var. neoformans serotype D (strain B-3501A)</name>
    <name type="common">Filobasidiella neoformans</name>
    <dbReference type="NCBI Taxonomy" id="283643"/>
    <lineage>
        <taxon>Eukaryota</taxon>
        <taxon>Fungi</taxon>
        <taxon>Dikarya</taxon>
        <taxon>Basidiomycota</taxon>
        <taxon>Agaricomycotina</taxon>
        <taxon>Tremellomycetes</taxon>
        <taxon>Tremellales</taxon>
        <taxon>Cryptococcaceae</taxon>
        <taxon>Cryptococcus</taxon>
        <taxon>Cryptococcus neoformans species complex</taxon>
    </lineage>
</organism>
<dbReference type="EMBL" id="AAEY01000055">
    <property type="protein sequence ID" value="EAL17923.1"/>
    <property type="molecule type" value="Genomic_DNA"/>
</dbReference>
<dbReference type="RefSeq" id="XP_772570.1">
    <property type="nucleotide sequence ID" value="XM_767477.1"/>
</dbReference>
<dbReference type="SMR" id="P0CM81"/>
<dbReference type="GeneID" id="4939094"/>
<dbReference type="KEGG" id="cnb:CNBL0500"/>
<dbReference type="VEuPathDB" id="FungiDB:CNBL0500"/>
<dbReference type="HOGENOM" id="CLU_011361_2_0_1"/>
<dbReference type="OrthoDB" id="5083at5206"/>
<dbReference type="GO" id="GO:0000139">
    <property type="term" value="C:Golgi membrane"/>
    <property type="evidence" value="ECO:0007669"/>
    <property type="project" value="UniProtKB-SubCell"/>
</dbReference>
<dbReference type="GO" id="GO:0017119">
    <property type="term" value="C:Golgi transport complex"/>
    <property type="evidence" value="ECO:0007669"/>
    <property type="project" value="InterPro"/>
</dbReference>
<dbReference type="GO" id="GO:0006891">
    <property type="term" value="P:intra-Golgi vesicle-mediated transport"/>
    <property type="evidence" value="ECO:0007669"/>
    <property type="project" value="InterPro"/>
</dbReference>
<dbReference type="GO" id="GO:0015031">
    <property type="term" value="P:protein transport"/>
    <property type="evidence" value="ECO:0007669"/>
    <property type="project" value="UniProtKB-KW"/>
</dbReference>
<dbReference type="InterPro" id="IPR010490">
    <property type="entry name" value="COG6"/>
</dbReference>
<dbReference type="InterPro" id="IPR048369">
    <property type="entry name" value="COG6_C"/>
</dbReference>
<dbReference type="InterPro" id="IPR048368">
    <property type="entry name" value="COG6_N"/>
</dbReference>
<dbReference type="PANTHER" id="PTHR21506">
    <property type="entry name" value="COMPONENT OF OLIGOMERIC GOLGI COMPLEX 6"/>
    <property type="match status" value="1"/>
</dbReference>
<dbReference type="PANTHER" id="PTHR21506:SF0">
    <property type="entry name" value="CONSERVED OLIGOMERIC GOLGI COMPLEX SUBUNIT 6"/>
    <property type="match status" value="1"/>
</dbReference>
<dbReference type="Pfam" id="PF20653">
    <property type="entry name" value="COG6_C"/>
    <property type="match status" value="1"/>
</dbReference>
<dbReference type="Pfam" id="PF06419">
    <property type="entry name" value="COG6_N"/>
    <property type="match status" value="1"/>
</dbReference>
<dbReference type="SMART" id="SM01087">
    <property type="entry name" value="COG6"/>
    <property type="match status" value="1"/>
</dbReference>
<evidence type="ECO:0000250" key="1"/>
<evidence type="ECO:0000256" key="2">
    <source>
        <dbReference type="SAM" id="MobiDB-lite"/>
    </source>
</evidence>
<evidence type="ECO:0000305" key="3"/>
<keyword id="KW-0333">Golgi apparatus</keyword>
<keyword id="KW-0472">Membrane</keyword>
<keyword id="KW-0653">Protein transport</keyword>
<keyword id="KW-0813">Transport</keyword>
<sequence length="742" mass="83679">MSTNPNTPAPPASRTNPISLRIYKAIGTSFDDVSSREALEIASGMYGPEDPKAKGKAQPEYEELEEDDDTLPKRRTLKGQSAAIARKYLKQDIETCLATGSTKFLEAFAEVDQKLNVLREHMQEMQVRCDQVQSELDQANSGTKFLLERADVLRSQRDSAQLRAHLITLFLSRFTLSNSELTALTSREVTIGQPLFDALDHVEKIRTDCEVLLSGEEGKAQAGLDIMSLTSEQLESGYSKIHRYCQFEFRQFTREAQLEASSVMRQAICRLRDRPALLADAIQTLTSTRQSSILHQFLDALTRGGPGGLPRPIEIHAHDPTRYVGDMLAWVHQTTATEHEFLEGMFGVKEKKRWVGQERGGEEGEEERMASEVLDKDLEGLSRPLKLRIQETIKSQEGIIMTYKIANLLHFYLVTMRKTIGGKAMLVQTLQEIHDQAYIAFYETLDAQGRGLLRFLHPPDATLTPPITLRDAAQILRELLFVYSTSLIDPAERESDADLAKLLDKAVGPCVEMCERMAEMRRGKSGGGEWERDIFMVNSLGYLEHTLEMYDFTTKTLHMLDEKIKTHVESMTFEHHGKLLESCGLAAVMRTIRTRPEDTPLSRLHATSPKSLTSALSKFSTWISTVDPSTSPRLALLTSPRLAVEIHRKALRKIYDAYGEICERVLDKAEGYEFGETMLRRGRDEVGVALGVGEDWELEEDTEEKSMKQKEQQDEDTEDQGEKGIMQEEHKAQDAGNTEDKA</sequence>
<comment type="function">
    <text evidence="1">Acts as a component of the peripheral membrane COG complex that is involved in intra-Golgi protein trafficking. COG is located at the cis-Golgi, and regulates tethering of retrograde intra-Golgi vesicles and possibly a number of other membrane trafficking events (By similarity).</text>
</comment>
<comment type="subcellular location">
    <subcellularLocation>
        <location evidence="1">Golgi apparatus membrane</location>
        <topology evidence="1">Peripheral membrane protein</topology>
    </subcellularLocation>
</comment>
<comment type="similarity">
    <text evidence="3">Belongs to the COG6 family.</text>
</comment>
<gene>
    <name type="primary">COG6</name>
    <name type="ordered locus">CNBL0500</name>
</gene>
<proteinExistence type="inferred from homology"/>
<reference key="1">
    <citation type="journal article" date="2005" name="Science">
        <title>The genome of the basidiomycetous yeast and human pathogen Cryptococcus neoformans.</title>
        <authorList>
            <person name="Loftus B.J."/>
            <person name="Fung E."/>
            <person name="Roncaglia P."/>
            <person name="Rowley D."/>
            <person name="Amedeo P."/>
            <person name="Bruno D."/>
            <person name="Vamathevan J."/>
            <person name="Miranda M."/>
            <person name="Anderson I.J."/>
            <person name="Fraser J.A."/>
            <person name="Allen J.E."/>
            <person name="Bosdet I.E."/>
            <person name="Brent M.R."/>
            <person name="Chiu R."/>
            <person name="Doering T.L."/>
            <person name="Donlin M.J."/>
            <person name="D'Souza C.A."/>
            <person name="Fox D.S."/>
            <person name="Grinberg V."/>
            <person name="Fu J."/>
            <person name="Fukushima M."/>
            <person name="Haas B.J."/>
            <person name="Huang J.C."/>
            <person name="Janbon G."/>
            <person name="Jones S.J.M."/>
            <person name="Koo H.L."/>
            <person name="Krzywinski M.I."/>
            <person name="Kwon-Chung K.J."/>
            <person name="Lengeler K.B."/>
            <person name="Maiti R."/>
            <person name="Marra M.A."/>
            <person name="Marra R.E."/>
            <person name="Mathewson C.A."/>
            <person name="Mitchell T.G."/>
            <person name="Pertea M."/>
            <person name="Riggs F.R."/>
            <person name="Salzberg S.L."/>
            <person name="Schein J.E."/>
            <person name="Shvartsbeyn A."/>
            <person name="Shin H."/>
            <person name="Shumway M."/>
            <person name="Specht C.A."/>
            <person name="Suh B.B."/>
            <person name="Tenney A."/>
            <person name="Utterback T.R."/>
            <person name="Wickes B.L."/>
            <person name="Wortman J.R."/>
            <person name="Wye N.H."/>
            <person name="Kronstad J.W."/>
            <person name="Lodge J.K."/>
            <person name="Heitman J."/>
            <person name="Davis R.W."/>
            <person name="Fraser C.M."/>
            <person name="Hyman R.W."/>
        </authorList>
    </citation>
    <scope>NUCLEOTIDE SEQUENCE [LARGE SCALE GENOMIC DNA]</scope>
    <source>
        <strain>B-3501A</strain>
    </source>
</reference>
<accession>P0CM81</accession>
<accession>Q55JD7</accession>
<accession>Q5KCC2</accession>